<name>VP9_MPRVN</name>
<protein>
    <recommendedName>
        <fullName>Putative outer capsid protein VP9</fullName>
    </recommendedName>
</protein>
<evidence type="ECO:0000305" key="1"/>
<feature type="chain" id="PRO_0000404167" description="Putative outer capsid protein VP9">
    <location>
        <begin position="1"/>
        <end position="393"/>
    </location>
</feature>
<proteinExistence type="predicted"/>
<organism>
    <name type="scientific">Micromonas pusilla reovirus (isolate Netherlands/2005)</name>
    <name type="common">MpRV</name>
    <dbReference type="NCBI Taxonomy" id="649596"/>
    <lineage>
        <taxon>Viruses</taxon>
        <taxon>Riboviria</taxon>
        <taxon>Orthornavirae</taxon>
        <taxon>Duplornaviricota</taxon>
        <taxon>Resentoviricetes</taxon>
        <taxon>Reovirales</taxon>
        <taxon>Sedoreoviridae</taxon>
        <taxon>Mimoreovirus</taxon>
        <taxon>Micromonas pusilla reovirus</taxon>
    </lineage>
</organism>
<gene>
    <name type="primary">S9</name>
</gene>
<sequence length="393" mass="44314">MSGIIVFHGDTPIAMSQTTDISSIVGNDIIHINDYALRIVPRKSTLLRIHVHSLKELLDINADYTPKYHTLIKEGKIEKGSPFDAIRNINDMSWCELKLYDAGTDTFTVMHHAPKYTIEVTLNKQQMNITDMNELKKEVPVRQTESTTKDIKSKSKTVNWNDIVEEDETKTIMFNLPDDSNPDDDYWPHRSLKVRMSDEYIARHADEENNSFFNPVSPFTAIMNKMHSTPTQGQSPQTPTVVPNAVIEFEGLVMESIKTRMLNESPSSVMVAGQGMYIKMFSMDEKGNISIITRNFSKEKLKLVIIETPKSVDPAEGNRTVIVTSKPVSNGIKLRKLERGMFLRAGDIDLKMAPCANLAEATSECTKFVRAFCKAYNSVVNSNLAIKFPSELD</sequence>
<organismHost>
    <name type="scientific">Micromonas pusilla</name>
    <name type="common">Picoplanktonic green alga</name>
    <name type="synonym">Chromulina pusilla</name>
    <dbReference type="NCBI Taxonomy" id="38833"/>
</organismHost>
<reference key="1">
    <citation type="journal article" date="2006" name="J. Gen. Virol.">
        <title>Micromonas pusilla reovirus: a new member of the family Reoviridae assigned to a novel proposed genus (Mimoreovirus).</title>
        <authorList>
            <person name="Attoui H."/>
            <person name="Jaafar F.M."/>
            <person name="Belhouchet M."/>
            <person name="de Micco P."/>
            <person name="de Lamballerie X."/>
            <person name="Brussaard C.P."/>
        </authorList>
    </citation>
    <scope>NUCLEOTIDE SEQUENCE [GENOMIC RNA]</scope>
</reference>
<comment type="subcellular location">
    <subcellularLocation>
        <location evidence="1">Virion</location>
    </subcellularLocation>
</comment>
<keyword id="KW-1185">Reference proteome</keyword>
<keyword id="KW-0946">Virion</keyword>
<accession>Q1I0U3</accession>
<dbReference type="EMBL" id="DQ126109">
    <property type="protein sequence ID" value="AAZ94049.1"/>
    <property type="molecule type" value="Genomic_RNA"/>
</dbReference>
<dbReference type="RefSeq" id="YP_654552.1">
    <property type="nucleotide sequence ID" value="NC_008179.1"/>
</dbReference>
<dbReference type="KEGG" id="vg:5076671"/>
<dbReference type="Proteomes" id="UP000000349">
    <property type="component" value="Genome"/>
</dbReference>
<dbReference type="GO" id="GO:0044423">
    <property type="term" value="C:virion component"/>
    <property type="evidence" value="ECO:0007669"/>
    <property type="project" value="UniProtKB-KW"/>
</dbReference>